<feature type="initiator methionine" description="Removed" evidence="4">
    <location>
        <position position="1"/>
    </location>
</feature>
<feature type="chain" id="PRO_0000419688" description="E3 ubiquitin-protein ligase TRIP12">
    <location>
        <begin position="2"/>
        <end position="1992"/>
    </location>
</feature>
<feature type="domain" description="WWE" evidence="6">
    <location>
        <begin position="749"/>
        <end position="836"/>
    </location>
</feature>
<feature type="domain" description="HECT" evidence="5">
    <location>
        <begin position="1885"/>
        <end position="1992"/>
    </location>
</feature>
<feature type="region of interest" description="Disordered" evidence="7">
    <location>
        <begin position="1"/>
        <end position="398"/>
    </location>
</feature>
<feature type="region of interest" description="Disordered" evidence="7">
    <location>
        <begin position="938"/>
        <end position="1044"/>
    </location>
</feature>
<feature type="region of interest" description="Disordered" evidence="7">
    <location>
        <begin position="1407"/>
        <end position="1434"/>
    </location>
</feature>
<feature type="region of interest" description="K-box" evidence="1">
    <location>
        <begin position="1496"/>
        <end position="1570"/>
    </location>
</feature>
<feature type="region of interest" description="Disordered" evidence="7">
    <location>
        <begin position="1568"/>
        <end position="1587"/>
    </location>
</feature>
<feature type="compositionally biased region" description="Polar residues" evidence="7">
    <location>
        <begin position="1"/>
        <end position="10"/>
    </location>
</feature>
<feature type="compositionally biased region" description="Polar residues" evidence="7">
    <location>
        <begin position="18"/>
        <end position="27"/>
    </location>
</feature>
<feature type="compositionally biased region" description="Low complexity" evidence="7">
    <location>
        <begin position="29"/>
        <end position="43"/>
    </location>
</feature>
<feature type="compositionally biased region" description="Basic and acidic residues" evidence="7">
    <location>
        <begin position="48"/>
        <end position="70"/>
    </location>
</feature>
<feature type="compositionally biased region" description="Polar residues" evidence="7">
    <location>
        <begin position="78"/>
        <end position="88"/>
    </location>
</feature>
<feature type="compositionally biased region" description="Polar residues" evidence="7">
    <location>
        <begin position="154"/>
        <end position="164"/>
    </location>
</feature>
<feature type="compositionally biased region" description="Low complexity" evidence="7">
    <location>
        <begin position="175"/>
        <end position="188"/>
    </location>
</feature>
<feature type="compositionally biased region" description="Low complexity" evidence="7">
    <location>
        <begin position="196"/>
        <end position="215"/>
    </location>
</feature>
<feature type="compositionally biased region" description="Polar residues" evidence="7">
    <location>
        <begin position="280"/>
        <end position="290"/>
    </location>
</feature>
<feature type="compositionally biased region" description="Low complexity" evidence="7">
    <location>
        <begin position="330"/>
        <end position="339"/>
    </location>
</feature>
<feature type="compositionally biased region" description="Basic and acidic residues" evidence="7">
    <location>
        <begin position="346"/>
        <end position="358"/>
    </location>
</feature>
<feature type="compositionally biased region" description="Polar residues" evidence="7">
    <location>
        <begin position="362"/>
        <end position="371"/>
    </location>
</feature>
<feature type="compositionally biased region" description="Polar residues" evidence="7">
    <location>
        <begin position="948"/>
        <end position="960"/>
    </location>
</feature>
<feature type="compositionally biased region" description="Low complexity" evidence="7">
    <location>
        <begin position="961"/>
        <end position="973"/>
    </location>
</feature>
<feature type="compositionally biased region" description="Basic residues" evidence="7">
    <location>
        <begin position="1001"/>
        <end position="1014"/>
    </location>
</feature>
<feature type="compositionally biased region" description="Basic and acidic residues" evidence="7">
    <location>
        <begin position="1017"/>
        <end position="1026"/>
    </location>
</feature>
<feature type="compositionally biased region" description="Low complexity" evidence="7">
    <location>
        <begin position="1029"/>
        <end position="1040"/>
    </location>
</feature>
<feature type="active site" description="Glycyl thioester intermediate" evidence="5">
    <location>
        <position position="1959"/>
    </location>
</feature>
<feature type="modified residue" description="N-acetylserine" evidence="4">
    <location>
        <position position="2"/>
    </location>
</feature>
<feature type="modified residue" description="Phosphoserine" evidence="4">
    <location>
        <position position="12"/>
    </location>
</feature>
<feature type="modified residue" description="Phosphoserine" evidence="4">
    <location>
        <position position="77"/>
    </location>
</feature>
<feature type="modified residue" description="Phosphoserine" evidence="3">
    <location>
        <position position="85"/>
    </location>
</feature>
<feature type="modified residue" description="Phosphoserine" evidence="4">
    <location>
        <position position="100"/>
    </location>
</feature>
<feature type="modified residue" description="N6-acetyllysine" evidence="3">
    <location>
        <position position="181"/>
    </location>
</feature>
<feature type="modified residue" description="Phosphoserine" evidence="4">
    <location>
        <position position="310"/>
    </location>
</feature>
<feature type="modified residue" description="Phosphoserine" evidence="4">
    <location>
        <position position="312"/>
    </location>
</feature>
<feature type="modified residue" description="Phosphoserine" evidence="4">
    <location>
        <position position="942"/>
    </location>
</feature>
<feature type="modified residue" description="Phosphoserine" evidence="4">
    <location>
        <position position="991"/>
    </location>
</feature>
<feature type="modified residue" description="Phosphoserine" evidence="4">
    <location>
        <position position="997"/>
    </location>
</feature>
<feature type="modified residue" description="Phosphoserine" evidence="2">
    <location>
        <position position="1016"/>
    </location>
</feature>
<feature type="modified residue" description="Phosphoserine" evidence="4">
    <location>
        <position position="1030"/>
    </location>
</feature>
<feature type="modified residue" description="Phosphoserine" evidence="4">
    <location>
        <position position="1317"/>
    </location>
</feature>
<feature type="modified residue" description="Phosphoserine" evidence="4">
    <location>
        <position position="1322"/>
    </location>
</feature>
<feature type="modified residue" description="Phosphoserine" evidence="3">
    <location>
        <position position="1329"/>
    </location>
</feature>
<feature type="modified residue" description="Phosphoserine" evidence="2">
    <location>
        <position position="1376"/>
    </location>
</feature>
<feature type="modified residue" description="Phosphothreonine" evidence="2">
    <location>
        <position position="1377"/>
    </location>
</feature>
<feature type="modified residue" description="N6-acetyllysine" evidence="3">
    <location>
        <position position="1425"/>
    </location>
</feature>
<feature type="modified residue" description="Phosphoserine" evidence="3">
    <location>
        <position position="1427"/>
    </location>
</feature>
<accession>E1B7Q7</accession>
<accession>Q0P5M6</accession>
<evidence type="ECO:0000250" key="1"/>
<evidence type="ECO:0000250" key="2">
    <source>
        <dbReference type="UniProtKB" id="F1LP64"/>
    </source>
</evidence>
<evidence type="ECO:0000250" key="3">
    <source>
        <dbReference type="UniProtKB" id="G5E870"/>
    </source>
</evidence>
<evidence type="ECO:0000250" key="4">
    <source>
        <dbReference type="UniProtKB" id="Q14669"/>
    </source>
</evidence>
<evidence type="ECO:0000255" key="5">
    <source>
        <dbReference type="PROSITE-ProRule" id="PRU00104"/>
    </source>
</evidence>
<evidence type="ECO:0000255" key="6">
    <source>
        <dbReference type="PROSITE-ProRule" id="PRU00248"/>
    </source>
</evidence>
<evidence type="ECO:0000256" key="7">
    <source>
        <dbReference type="SAM" id="MobiDB-lite"/>
    </source>
</evidence>
<evidence type="ECO:0000305" key="8"/>
<organism>
    <name type="scientific">Bos taurus</name>
    <name type="common">Bovine</name>
    <dbReference type="NCBI Taxonomy" id="9913"/>
    <lineage>
        <taxon>Eukaryota</taxon>
        <taxon>Metazoa</taxon>
        <taxon>Chordata</taxon>
        <taxon>Craniata</taxon>
        <taxon>Vertebrata</taxon>
        <taxon>Euteleostomi</taxon>
        <taxon>Mammalia</taxon>
        <taxon>Eutheria</taxon>
        <taxon>Laurasiatheria</taxon>
        <taxon>Artiodactyla</taxon>
        <taxon>Ruminantia</taxon>
        <taxon>Pecora</taxon>
        <taxon>Bovidae</taxon>
        <taxon>Bovinae</taxon>
        <taxon>Bos</taxon>
    </lineage>
</organism>
<gene>
    <name type="primary">TRIP12</name>
</gene>
<dbReference type="EC" id="2.3.2.26" evidence="4"/>
<dbReference type="EMBL" id="DAAA02006173">
    <property type="status" value="NOT_ANNOTATED_CDS"/>
    <property type="molecule type" value="Genomic_DNA"/>
</dbReference>
<dbReference type="EMBL" id="DAAA02006174">
    <property type="status" value="NOT_ANNOTATED_CDS"/>
    <property type="molecule type" value="Genomic_DNA"/>
</dbReference>
<dbReference type="EMBL" id="DAAA02006175">
    <property type="status" value="NOT_ANNOTATED_CDS"/>
    <property type="molecule type" value="Genomic_DNA"/>
</dbReference>
<dbReference type="EMBL" id="BC119851">
    <property type="protein sequence ID" value="AAI19852.1"/>
    <property type="molecule type" value="mRNA"/>
</dbReference>
<dbReference type="RefSeq" id="NP_001178132.1">
    <property type="nucleotide sequence ID" value="NM_001191203.1"/>
</dbReference>
<dbReference type="SMR" id="E1B7Q7"/>
<dbReference type="FunCoup" id="E1B7Q7">
    <property type="interactions" value="4529"/>
</dbReference>
<dbReference type="STRING" id="9913.ENSBTAP00000037967"/>
<dbReference type="iPTMnet" id="E1B7Q7"/>
<dbReference type="PaxDb" id="9913-ENSBTAP00000037967"/>
<dbReference type="GeneID" id="514387"/>
<dbReference type="KEGG" id="bta:514387"/>
<dbReference type="CTD" id="9320"/>
<dbReference type="VEuPathDB" id="HostDB:ENSBTAG00000021653"/>
<dbReference type="eggNOG" id="KOG0168">
    <property type="taxonomic scope" value="Eukaryota"/>
</dbReference>
<dbReference type="eggNOG" id="KOG0170">
    <property type="taxonomic scope" value="Eukaryota"/>
</dbReference>
<dbReference type="HOGENOM" id="CLU_000366_2_0_1"/>
<dbReference type="InParanoid" id="E1B7Q7"/>
<dbReference type="OMA" id="AEPLSQF"/>
<dbReference type="OrthoDB" id="271273at2759"/>
<dbReference type="TreeFam" id="TF323674"/>
<dbReference type="Reactome" id="R-BTA-983168">
    <property type="pathway name" value="Antigen processing: Ubiquitination &amp; Proteasome degradation"/>
</dbReference>
<dbReference type="UniPathway" id="UPA00143"/>
<dbReference type="Proteomes" id="UP000009136">
    <property type="component" value="Chromosome 2"/>
</dbReference>
<dbReference type="Bgee" id="ENSBTAG00000021653">
    <property type="expression patterns" value="Expressed in spermatocyte and 108 other cell types or tissues"/>
</dbReference>
<dbReference type="GO" id="GO:0016607">
    <property type="term" value="C:nuclear speck"/>
    <property type="evidence" value="ECO:0000318"/>
    <property type="project" value="GO_Central"/>
</dbReference>
<dbReference type="GO" id="GO:0005654">
    <property type="term" value="C:nucleoplasm"/>
    <property type="evidence" value="ECO:0000250"/>
    <property type="project" value="UniProtKB"/>
</dbReference>
<dbReference type="GO" id="GO:0061630">
    <property type="term" value="F:ubiquitin protein ligase activity"/>
    <property type="evidence" value="ECO:0000250"/>
    <property type="project" value="UniProtKB"/>
</dbReference>
<dbReference type="GO" id="GO:0006974">
    <property type="term" value="P:DNA damage response"/>
    <property type="evidence" value="ECO:0000318"/>
    <property type="project" value="GO_Central"/>
</dbReference>
<dbReference type="GO" id="GO:0006281">
    <property type="term" value="P:DNA repair"/>
    <property type="evidence" value="ECO:0007669"/>
    <property type="project" value="UniProtKB-KW"/>
</dbReference>
<dbReference type="GO" id="GO:0140861">
    <property type="term" value="P:DNA repair-dependent chromatin remodeling"/>
    <property type="evidence" value="ECO:0000250"/>
    <property type="project" value="UniProtKB"/>
</dbReference>
<dbReference type="GO" id="GO:0033696">
    <property type="term" value="P:heterochromatin boundary formation"/>
    <property type="evidence" value="ECO:0000250"/>
    <property type="project" value="UniProtKB"/>
</dbReference>
<dbReference type="GO" id="GO:0043161">
    <property type="term" value="P:proteasome-mediated ubiquitin-dependent protein catabolic process"/>
    <property type="evidence" value="ECO:0000318"/>
    <property type="project" value="GO_Central"/>
</dbReference>
<dbReference type="GO" id="GO:0000209">
    <property type="term" value="P:protein polyubiquitination"/>
    <property type="evidence" value="ECO:0000250"/>
    <property type="project" value="UniProtKB"/>
</dbReference>
<dbReference type="GO" id="GO:0045995">
    <property type="term" value="P:regulation of embryonic development"/>
    <property type="evidence" value="ECO:0000250"/>
    <property type="project" value="UniProtKB"/>
</dbReference>
<dbReference type="GO" id="GO:0006511">
    <property type="term" value="P:ubiquitin-dependent protein catabolic process"/>
    <property type="evidence" value="ECO:0000250"/>
    <property type="project" value="UniProtKB"/>
</dbReference>
<dbReference type="CDD" id="cd00078">
    <property type="entry name" value="HECTc"/>
    <property type="match status" value="1"/>
</dbReference>
<dbReference type="FunFam" id="3.30.2410.10:FF:000005">
    <property type="entry name" value="E3 ubiquitin-protein ligase TRIP12 isoform X1"/>
    <property type="match status" value="1"/>
</dbReference>
<dbReference type="FunFam" id="3.90.1750.10:FF:000006">
    <property type="entry name" value="E3 ubiquitin-protein ligase TRIP12 isoform X1"/>
    <property type="match status" value="1"/>
</dbReference>
<dbReference type="FunFam" id="1.25.10.10:FF:000018">
    <property type="entry name" value="E3 ubiquitin-protein ligase TRIP12 isoform X3"/>
    <property type="match status" value="1"/>
</dbReference>
<dbReference type="Gene3D" id="3.30.2410.10">
    <property type="entry name" value="Hect, E3 ligase catalytic domain"/>
    <property type="match status" value="1"/>
</dbReference>
<dbReference type="Gene3D" id="3.90.1750.10">
    <property type="entry name" value="Hect, E3 ligase catalytic domains"/>
    <property type="match status" value="1"/>
</dbReference>
<dbReference type="Gene3D" id="1.25.10.10">
    <property type="entry name" value="Leucine-rich Repeat Variant"/>
    <property type="match status" value="1"/>
</dbReference>
<dbReference type="InterPro" id="IPR011989">
    <property type="entry name" value="ARM-like"/>
</dbReference>
<dbReference type="InterPro" id="IPR016024">
    <property type="entry name" value="ARM-type_fold"/>
</dbReference>
<dbReference type="InterPro" id="IPR000569">
    <property type="entry name" value="HECT_dom"/>
</dbReference>
<dbReference type="InterPro" id="IPR035983">
    <property type="entry name" value="Hect_E3_ubiquitin_ligase"/>
</dbReference>
<dbReference type="InterPro" id="IPR045322">
    <property type="entry name" value="HECTD1/TRIP12-like"/>
</dbReference>
<dbReference type="InterPro" id="IPR004170">
    <property type="entry name" value="WWE_dom"/>
</dbReference>
<dbReference type="InterPro" id="IPR037197">
    <property type="entry name" value="WWE_dom_sf"/>
</dbReference>
<dbReference type="PANTHER" id="PTHR45670">
    <property type="entry name" value="E3 UBIQUITIN-PROTEIN LIGASE TRIP12"/>
    <property type="match status" value="1"/>
</dbReference>
<dbReference type="PANTHER" id="PTHR45670:SF13">
    <property type="entry name" value="E3 UBIQUITIN-PROTEIN LIGASE TRIP12"/>
    <property type="match status" value="1"/>
</dbReference>
<dbReference type="Pfam" id="PF00632">
    <property type="entry name" value="HECT"/>
    <property type="match status" value="1"/>
</dbReference>
<dbReference type="SMART" id="SM00119">
    <property type="entry name" value="HECTc"/>
    <property type="match status" value="1"/>
</dbReference>
<dbReference type="SUPFAM" id="SSF48371">
    <property type="entry name" value="ARM repeat"/>
    <property type="match status" value="1"/>
</dbReference>
<dbReference type="SUPFAM" id="SSF56204">
    <property type="entry name" value="Hect, E3 ligase catalytic domain"/>
    <property type="match status" value="1"/>
</dbReference>
<dbReference type="SUPFAM" id="SSF117839">
    <property type="entry name" value="WWE domain"/>
    <property type="match status" value="1"/>
</dbReference>
<dbReference type="PROSITE" id="PS50237">
    <property type="entry name" value="HECT"/>
    <property type="match status" value="1"/>
</dbReference>
<dbReference type="PROSITE" id="PS50918">
    <property type="entry name" value="WWE"/>
    <property type="match status" value="1"/>
</dbReference>
<reference key="1">
    <citation type="journal article" date="2009" name="Genome Biol.">
        <title>A whole-genome assembly of the domestic cow, Bos taurus.</title>
        <authorList>
            <person name="Zimin A.V."/>
            <person name="Delcher A.L."/>
            <person name="Florea L."/>
            <person name="Kelley D.R."/>
            <person name="Schatz M.C."/>
            <person name="Puiu D."/>
            <person name="Hanrahan F."/>
            <person name="Pertea G."/>
            <person name="Van Tassell C.P."/>
            <person name="Sonstegard T.S."/>
            <person name="Marcais G."/>
            <person name="Roberts M."/>
            <person name="Subramanian P."/>
            <person name="Yorke J.A."/>
            <person name="Salzberg S.L."/>
        </authorList>
    </citation>
    <scope>NUCLEOTIDE SEQUENCE [LARGE SCALE GENOMIC DNA]</scope>
    <source>
        <strain>Hereford</strain>
    </source>
</reference>
<reference key="2">
    <citation type="submission" date="2006-08" db="EMBL/GenBank/DDBJ databases">
        <authorList>
            <consortium name="NIH - Mammalian Gene Collection (MGC) project"/>
        </authorList>
    </citation>
    <scope>NUCLEOTIDE SEQUENCE [LARGE SCALE MRNA] OF 878-1992</scope>
    <source>
        <strain>Hereford</strain>
        <tissue>Hippocampus</tissue>
    </source>
</reference>
<protein>
    <recommendedName>
        <fullName>E3 ubiquitin-protein ligase TRIP12</fullName>
        <ecNumber evidence="4">2.3.2.26</ecNumber>
    </recommendedName>
    <alternativeName>
        <fullName>HECT-type E3 ubiquitin transferase TRIP12</fullName>
    </alternativeName>
    <alternativeName>
        <fullName>Thyroid receptor-interacting protein 12</fullName>
        <shortName>TR-interacting protein 12</shortName>
        <shortName>TRIP-12</shortName>
    </alternativeName>
</protein>
<proteinExistence type="evidence at transcript level"/>
<comment type="function">
    <text evidence="4">E3 ubiquitin-protein ligase involved in ubiquitin fusion degradation (UFD) pathway and regulation of DNA repair. Part of the ubiquitin fusion degradation (UFD) pathway, a process that mediates ubiquitination of protein at their N-terminus, regardless of the presence of lysine residues in target proteins. Acts as a key regulator of DNA damage response by acting as a suppressor of RNF168, an E3 ubiquitin-protein ligase that promotes accumulation of 'Lys-63'-linked histone H2A and H2AX at DNA damage sites, thereby acting as a guard against excessive spreading of ubiquitinated chromatin at damaged chromosomes. In normal cells, mediates ubiquitination and degradation of isoform p19ARF/ARF of CDKN2A, a lysine-less tumor suppressor required for p53/TP53 activation under oncogenic stress. In cancer cells, however, isoform p19ARF/ARF and TRIP12 are located in different cell compartments, preventing isoform p19ARF/ARF ubiquitination and degradation. Does not mediate ubiquitination of isoform p16-INK4a of CDKN2A. Also catalyzes ubiquitination of NAE1 and SMARCE1, leading to their degradation. Ubiquitination and degradation of target proteins is regulated by interaction with proteins such as MYC, TRADD or SMARCC1, which disrupt the interaction between TRIP12 and target proteins. Mediates ubiquitination of ASXL1: following binding to N(6)-methyladenosine methylated DNA, ASXL1 is ubiquitinated by TRIP12, leading to its degradation and subsequent inactivation of the PR-DUB complex.</text>
</comment>
<comment type="catalytic activity">
    <reaction evidence="4">
        <text>S-ubiquitinyl-[E2 ubiquitin-conjugating enzyme]-L-cysteine + [acceptor protein]-L-lysine = [E2 ubiquitin-conjugating enzyme]-L-cysteine + N(6)-ubiquitinyl-[acceptor protein]-L-lysine.</text>
        <dbReference type="EC" id="2.3.2.26"/>
    </reaction>
</comment>
<comment type="pathway">
    <text evidence="4">Protein modification; protein ubiquitination.</text>
</comment>
<comment type="subunit">
    <text evidence="4">Interacts with MYC; leading to disrupt interaction with isoform p19ARF/ARF of CDKN2A. Interacts with TRADD; leading to disrupt interaction with isoform p19ARF/ARF of CDKN2A. Interacts with SMARCC1; leading to disrupt interaction with SMARCE1.</text>
</comment>
<comment type="subcellular location">
    <subcellularLocation>
        <location evidence="4">Nucleus</location>
        <location evidence="4">Nucleoplasm</location>
    </subcellularLocation>
</comment>
<comment type="similarity">
    <text evidence="8">Belongs to the UPL family. K-HECT subfamily.</text>
</comment>
<name>TRIPC_BOVIN</name>
<keyword id="KW-0007">Acetylation</keyword>
<keyword id="KW-0227">DNA damage</keyword>
<keyword id="KW-0234">DNA repair</keyword>
<keyword id="KW-0539">Nucleus</keyword>
<keyword id="KW-0597">Phosphoprotein</keyword>
<keyword id="KW-1185">Reference proteome</keyword>
<keyword id="KW-0808">Transferase</keyword>
<keyword id="KW-0833">Ubl conjugation pathway</keyword>
<sequence>MSNRPNNNPGGSLRRSQRNTAGAQPQDDSIGGRSCSSSSVVIVPQPEDPDRANTSEKQKTGQVPKKDNSRGVKRSASPDYNRTNSPSSAKKPKALQHTESPSETSKPHSKSKKRHLDQEPQLKSAPSPSTSKAHTRKSGAAAGSRSQKRKRTESSCIKSASVSEATGAEERSAKPTKLASKSAASAKAGCSTITDSSSAASTSSSSSAVASASSAVPPGARVKQGKDQNKARRSRSASSPSPRRSSREKEQSKTGGSSKFDWAARFSPKVSLPKTKLSLPGSSKSETSKPGPSGLQAKLASLRKSTKKRSESPPAELPSLRRSTRQKTTGSCASASRRGSGLGKRGAAEARRQEKMADPEGNQETVNSSAARTDETPQGAAGAVGMTTSGESESDDSEMGRLQALLEARGLPPHLFGPLGPRMSQLFHRTIGSGASSKAQQLLQGLQASDESQQLQAVIEMCQLLVMGNEETLGGFPVKSVVPALITLLQMEHNFDIMNHACRALTYMMEALPRSSAVVVDAIPVFLEKLQVIQCIDVAEQALTALEMLSRRHSKAILQAGGLADCLLYLEFFSINAQRNALAIAANCCQSITPDEFHFVADSLPLLTQRLTHQDKKSVESTCLCFARLVDNFQHEENLLQQVASKDLLTNVQQLLVVTPPILSSGMFIMVVRMFSLMCSNCPTLAVQLMKQNIAETLHFLLCGASNGSCQEQIDLVPRSPQELYELTSLICELMPCLPKEGIFAVDTMLKKGNAQNTDGAIWQWRDDRGLWHPYNRIDSRIIEQINEDTGTARAIQRKPNPLANTNTSGYSELKKDDARAQLMKEDPELAKSFIKTLFGVLYEVYSSSAGPAVRHKCLRAILRIIYFADAELLKDVLKNHAVSSHIASMLSSQDLKIVVGALQMAEILMQKLPDIFSVYFRREGVMHQVKHLAESESLLTSPPKACTNGSGSLGSTPSVNSGTATAATNASADLGSPSLQHSRDDSLDLSPQGRLSDVLKRKRLPKRGSRRPKYSPPRDDDKVDNQAKSPTTTQSPKSSFLASLNPKTWGRLSAQSNSNNIEPARTAGVSGLARAASKDTISNNREKIKGWIKEQAHKFVERYFSSENMDGSNPALNVLQRLCAATEQLNLQVDGGAECLVEIRSIVSESDVSSFEIQHSGFVKQLLLYLTSKSEKDAVSREIRLKRFLHVFFSSPLPGEEPIERVEPVGNAPLLALVHKMNNCLSQMEQFPVKVHDFPSGNGTGGSFSLNRGSQALKFFNTHQLKCQLQRHPDCANVKQWKGGPVKIDPLALVQAIERYLVVRGYGRVREDDEDSDDDGSDEEIDESLAAQFLNSGNVRHRLQFYIGEHLLPYNMTVYQAVRQFSIQAEDERESTDDESNPLGRAGIWTKTHTIWYKPVREDEESNKDCVGGKRGRAQTAPTKTSPRNAKKHDELWNDGVCPSVSNPLEVYLIPTAPENITFEDPSLDVILLLRVLHAVSRYWYYLYDNAMCKEIIPTSEFINSKLTAKANRQLQDPLVIMTGNIPTWLTELGKTCPFFFPFDTRQMLFYVTAFDRDRAMQRLLDTNPEINQSDSQDSRVAPRLDRKKRTVNREELLKQAESVMQDLGSSRAMLEIQYENEVGTGLGPTLEFYALVSQELQRADLGLWRGEEVTLSNPKGSQEGTKYIQNLQGLFALPFGRTAKPAHIAKVKMKFRFLGKLMAKAIMDFRLVDLPLGLPFYKWMLRQETSLTSHDLFDIDPVVARSVYHLEDIVRQKKRLEQDKSQTKESLQYALETLTMNGCSVEDLGLDFTLPGFPNIELKKGGKDIPVTIHNLEEYLRLVIFWALNEGVSRQFDSFRDGFESVFPLSHLQYFYPEELDQLLCGSKADTWDAKTLMECCRPDHGYTHDSRAVKFLFEILSSFDNEQQRLFLQFVTGSPRLPVGGFRSLNPPLTIVRKTFESTENPDDFLPSVMTCVNYLKLPDYSSLEIMREKLLMAAREGQQSFHLS</sequence>